<dbReference type="EC" id="4.2.1.36"/>
<dbReference type="EMBL" id="CR382138">
    <property type="protein sequence ID" value="CAG89007.1"/>
    <property type="molecule type" value="Genomic_DNA"/>
</dbReference>
<dbReference type="RefSeq" id="XP_460673.1">
    <property type="nucleotide sequence ID" value="XM_460673.1"/>
</dbReference>
<dbReference type="SMR" id="Q6BM98"/>
<dbReference type="FunCoup" id="Q6BM98">
    <property type="interactions" value="158"/>
</dbReference>
<dbReference type="STRING" id="284592.Q6BM98"/>
<dbReference type="GeneID" id="2903254"/>
<dbReference type="KEGG" id="dha:DEHA2F07238g"/>
<dbReference type="VEuPathDB" id="FungiDB:DEHA2F07238g"/>
<dbReference type="eggNOG" id="KOG0453">
    <property type="taxonomic scope" value="Eukaryota"/>
</dbReference>
<dbReference type="HOGENOM" id="CLU_006714_3_1_1"/>
<dbReference type="InParanoid" id="Q6BM98"/>
<dbReference type="OMA" id="LCDADNI"/>
<dbReference type="OrthoDB" id="10262323at2759"/>
<dbReference type="UniPathway" id="UPA00033">
    <property type="reaction ID" value="UER01027"/>
</dbReference>
<dbReference type="Proteomes" id="UP000000599">
    <property type="component" value="Chromosome F"/>
</dbReference>
<dbReference type="GO" id="GO:0005759">
    <property type="term" value="C:mitochondrial matrix"/>
    <property type="evidence" value="ECO:0007669"/>
    <property type="project" value="EnsemblFungi"/>
</dbReference>
<dbReference type="GO" id="GO:0051539">
    <property type="term" value="F:4 iron, 4 sulfur cluster binding"/>
    <property type="evidence" value="ECO:0007669"/>
    <property type="project" value="InterPro"/>
</dbReference>
<dbReference type="GO" id="GO:0004409">
    <property type="term" value="F:homoaconitate hydratase activity"/>
    <property type="evidence" value="ECO:0007669"/>
    <property type="project" value="UniProtKB-EC"/>
</dbReference>
<dbReference type="GO" id="GO:0046872">
    <property type="term" value="F:metal ion binding"/>
    <property type="evidence" value="ECO:0007669"/>
    <property type="project" value="UniProtKB-KW"/>
</dbReference>
<dbReference type="GO" id="GO:0019878">
    <property type="term" value="P:lysine biosynthetic process via aminoadipic acid"/>
    <property type="evidence" value="ECO:0007669"/>
    <property type="project" value="UniProtKB-UniPathway"/>
</dbReference>
<dbReference type="CDD" id="cd01582">
    <property type="entry name" value="Homoaconitase"/>
    <property type="match status" value="1"/>
</dbReference>
<dbReference type="CDD" id="cd01674">
    <property type="entry name" value="Homoaconitase_Swivel"/>
    <property type="match status" value="1"/>
</dbReference>
<dbReference type="FunFam" id="3.30.499.10:FF:000013">
    <property type="entry name" value="Homoaconitase, mitochondrial"/>
    <property type="match status" value="1"/>
</dbReference>
<dbReference type="FunFam" id="3.30.499.10:FF:000016">
    <property type="entry name" value="Homoaconitase, mitochondrial"/>
    <property type="match status" value="1"/>
</dbReference>
<dbReference type="Gene3D" id="3.30.499.10">
    <property type="entry name" value="Aconitase, domain 3"/>
    <property type="match status" value="2"/>
</dbReference>
<dbReference type="Gene3D" id="3.20.19.10">
    <property type="entry name" value="Aconitase, domain 4"/>
    <property type="match status" value="1"/>
</dbReference>
<dbReference type="InterPro" id="IPR015931">
    <property type="entry name" value="Acnase/IPM_dHydase_lsu_aba_1/3"/>
</dbReference>
<dbReference type="InterPro" id="IPR001030">
    <property type="entry name" value="Acoase/IPM_deHydtase_lsu_aba"/>
</dbReference>
<dbReference type="InterPro" id="IPR015928">
    <property type="entry name" value="Aconitase/3IPM_dehydase_swvl"/>
</dbReference>
<dbReference type="InterPro" id="IPR018136">
    <property type="entry name" value="Aconitase_4Fe-4S_BS"/>
</dbReference>
<dbReference type="InterPro" id="IPR036008">
    <property type="entry name" value="Aconitase_4Fe-4S_dom"/>
</dbReference>
<dbReference type="InterPro" id="IPR000573">
    <property type="entry name" value="AconitaseA/IPMdHydase_ssu_swvl"/>
</dbReference>
<dbReference type="InterPro" id="IPR004418">
    <property type="entry name" value="Homoaconitase_mito"/>
</dbReference>
<dbReference type="InterPro" id="IPR039386">
    <property type="entry name" value="Homoaconitase_swivel"/>
</dbReference>
<dbReference type="InterPro" id="IPR050067">
    <property type="entry name" value="IPM_dehydratase_rel_enz"/>
</dbReference>
<dbReference type="NCBIfam" id="TIGR00139">
    <property type="entry name" value="h_aconitase"/>
    <property type="match status" value="1"/>
</dbReference>
<dbReference type="PANTHER" id="PTHR43822:SF2">
    <property type="entry name" value="HOMOACONITASE, MITOCHONDRIAL"/>
    <property type="match status" value="1"/>
</dbReference>
<dbReference type="PANTHER" id="PTHR43822">
    <property type="entry name" value="HOMOACONITASE, MITOCHONDRIAL-RELATED"/>
    <property type="match status" value="1"/>
</dbReference>
<dbReference type="Pfam" id="PF00330">
    <property type="entry name" value="Aconitase"/>
    <property type="match status" value="1"/>
</dbReference>
<dbReference type="Pfam" id="PF00694">
    <property type="entry name" value="Aconitase_C"/>
    <property type="match status" value="1"/>
</dbReference>
<dbReference type="PRINTS" id="PR00415">
    <property type="entry name" value="ACONITASE"/>
</dbReference>
<dbReference type="SUPFAM" id="SSF53732">
    <property type="entry name" value="Aconitase iron-sulfur domain"/>
    <property type="match status" value="1"/>
</dbReference>
<dbReference type="SUPFAM" id="SSF52016">
    <property type="entry name" value="LeuD/IlvD-like"/>
    <property type="match status" value="1"/>
</dbReference>
<dbReference type="PROSITE" id="PS00450">
    <property type="entry name" value="ACONITASE_1"/>
    <property type="match status" value="1"/>
</dbReference>
<dbReference type="PROSITE" id="PS01244">
    <property type="entry name" value="ACONITASE_2"/>
    <property type="match status" value="1"/>
</dbReference>
<proteinExistence type="inferred from homology"/>
<accession>Q6BM98</accession>
<feature type="transit peptide" description="Mitochondrion" evidence="2">
    <location>
        <begin position="1"/>
        <end position="19"/>
    </location>
</feature>
<feature type="chain" id="PRO_0000247923" description="Homoaconitase, mitochondrial">
    <location>
        <begin position="20"/>
        <end position="688"/>
    </location>
</feature>
<feature type="binding site" evidence="1">
    <location>
        <position position="346"/>
    </location>
    <ligand>
        <name>[4Fe-4S] cluster</name>
        <dbReference type="ChEBI" id="CHEBI:49883"/>
    </ligand>
</feature>
<feature type="binding site" evidence="1">
    <location>
        <position position="406"/>
    </location>
    <ligand>
        <name>[4Fe-4S] cluster</name>
        <dbReference type="ChEBI" id="CHEBI:49883"/>
    </ligand>
</feature>
<feature type="binding site" evidence="1">
    <location>
        <position position="409"/>
    </location>
    <ligand>
        <name>[4Fe-4S] cluster</name>
        <dbReference type="ChEBI" id="CHEBI:49883"/>
    </ligand>
</feature>
<organism>
    <name type="scientific">Debaryomyces hansenii (strain ATCC 36239 / CBS 767 / BCRC 21394 / JCM 1990 / NBRC 0083 / IGC 2968)</name>
    <name type="common">Yeast</name>
    <name type="synonym">Torulaspora hansenii</name>
    <dbReference type="NCBI Taxonomy" id="284592"/>
    <lineage>
        <taxon>Eukaryota</taxon>
        <taxon>Fungi</taxon>
        <taxon>Dikarya</taxon>
        <taxon>Ascomycota</taxon>
        <taxon>Saccharomycotina</taxon>
        <taxon>Pichiomycetes</taxon>
        <taxon>Debaryomycetaceae</taxon>
        <taxon>Debaryomyces</taxon>
    </lineage>
</organism>
<gene>
    <name type="primary">LYS4</name>
    <name type="ordered locus">DEHA2F07238g</name>
</gene>
<protein>
    <recommendedName>
        <fullName>Homoaconitase, mitochondrial</fullName>
        <ecNumber>4.2.1.36</ecNumber>
    </recommendedName>
    <alternativeName>
        <fullName>Homoaconitate hydratase</fullName>
    </alternativeName>
</protein>
<comment type="function">
    <text evidence="1">Catalyzes the reversible hydration of cis-homoaconitate to (2R,3S)-homoisocitrate, a step in the alpha-aminoadipate pathway for lysine biosynthesis.</text>
</comment>
<comment type="catalytic activity">
    <reaction>
        <text>(2R,3S)-homoisocitrate = cis-homoaconitate + H2O</text>
        <dbReference type="Rhea" id="RHEA:15485"/>
        <dbReference type="ChEBI" id="CHEBI:15377"/>
        <dbReference type="ChEBI" id="CHEBI:15404"/>
        <dbReference type="ChEBI" id="CHEBI:58174"/>
        <dbReference type="EC" id="4.2.1.36"/>
    </reaction>
</comment>
<comment type="cofactor">
    <cofactor evidence="1">
        <name>[4Fe-4S] cluster</name>
        <dbReference type="ChEBI" id="CHEBI:49883"/>
    </cofactor>
    <text evidence="1">Binds 1 [4Fe-4S] cluster per subunit.</text>
</comment>
<comment type="pathway">
    <text>Amino-acid biosynthesis; L-lysine biosynthesis via AAA pathway; L-alpha-aminoadipate from 2-oxoglutarate: step 3/5.</text>
</comment>
<comment type="subcellular location">
    <subcellularLocation>
        <location evidence="1">Mitochondrion</location>
    </subcellularLocation>
</comment>
<comment type="similarity">
    <text evidence="3">Belongs to the aconitase/IPM isomerase family.</text>
</comment>
<evidence type="ECO:0000250" key="1"/>
<evidence type="ECO:0000255" key="2"/>
<evidence type="ECO:0000305" key="3"/>
<keyword id="KW-0028">Amino-acid biosynthesis</keyword>
<keyword id="KW-0408">Iron</keyword>
<keyword id="KW-0411">Iron-sulfur</keyword>
<keyword id="KW-0456">Lyase</keyword>
<keyword id="KW-0457">Lysine biosynthesis</keyword>
<keyword id="KW-0479">Metal-binding</keyword>
<keyword id="KW-0496">Mitochondrion</keyword>
<keyword id="KW-1185">Reference proteome</keyword>
<keyword id="KW-0809">Transit peptide</keyword>
<reference key="1">
    <citation type="journal article" date="2004" name="Nature">
        <title>Genome evolution in yeasts.</title>
        <authorList>
            <person name="Dujon B."/>
            <person name="Sherman D."/>
            <person name="Fischer G."/>
            <person name="Durrens P."/>
            <person name="Casaregola S."/>
            <person name="Lafontaine I."/>
            <person name="de Montigny J."/>
            <person name="Marck C."/>
            <person name="Neuveglise C."/>
            <person name="Talla E."/>
            <person name="Goffard N."/>
            <person name="Frangeul L."/>
            <person name="Aigle M."/>
            <person name="Anthouard V."/>
            <person name="Babour A."/>
            <person name="Barbe V."/>
            <person name="Barnay S."/>
            <person name="Blanchin S."/>
            <person name="Beckerich J.-M."/>
            <person name="Beyne E."/>
            <person name="Bleykasten C."/>
            <person name="Boisrame A."/>
            <person name="Boyer J."/>
            <person name="Cattolico L."/>
            <person name="Confanioleri F."/>
            <person name="de Daruvar A."/>
            <person name="Despons L."/>
            <person name="Fabre E."/>
            <person name="Fairhead C."/>
            <person name="Ferry-Dumazet H."/>
            <person name="Groppi A."/>
            <person name="Hantraye F."/>
            <person name="Hennequin C."/>
            <person name="Jauniaux N."/>
            <person name="Joyet P."/>
            <person name="Kachouri R."/>
            <person name="Kerrest A."/>
            <person name="Koszul R."/>
            <person name="Lemaire M."/>
            <person name="Lesur I."/>
            <person name="Ma L."/>
            <person name="Muller H."/>
            <person name="Nicaud J.-M."/>
            <person name="Nikolski M."/>
            <person name="Oztas S."/>
            <person name="Ozier-Kalogeropoulos O."/>
            <person name="Pellenz S."/>
            <person name="Potier S."/>
            <person name="Richard G.-F."/>
            <person name="Straub M.-L."/>
            <person name="Suleau A."/>
            <person name="Swennen D."/>
            <person name="Tekaia F."/>
            <person name="Wesolowski-Louvel M."/>
            <person name="Westhof E."/>
            <person name="Wirth B."/>
            <person name="Zeniou-Meyer M."/>
            <person name="Zivanovic Y."/>
            <person name="Bolotin-Fukuhara M."/>
            <person name="Thierry A."/>
            <person name="Bouchier C."/>
            <person name="Caudron B."/>
            <person name="Scarpelli C."/>
            <person name="Gaillardin C."/>
            <person name="Weissenbach J."/>
            <person name="Wincker P."/>
            <person name="Souciet J.-L."/>
        </authorList>
    </citation>
    <scope>NUCLEOTIDE SEQUENCE [LARGE SCALE GENOMIC DNA]</scope>
    <source>
        <strain>ATCC 36239 / CBS 767 / BCRC 21394 / JCM 1990 / NBRC 0083 / IGC 2968</strain>
    </source>
</reference>
<name>LYS4_DEBHA</name>
<sequence length="688" mass="74358">MALLYLSTRSSLKKTGARCLSSSSILYRGQNLTEKIVQKYAVGLADDKKVFSGDYVTIKPAHCMSHDNSWPVATKFMGLGATNVHDNRQIVCTLDHDVQNKSEKNLEKYHNIENFAKEQGIDFYPAGRGIGHQIMIEEGYAYPLNLTVASDSHSNTYGGIGSLGTPIVRTDAASIWATGQTWWQIPPVAKVELVGQLPKGATGKDIIVALCGIFNNDEVLNHAIEFTGEGVKNLSVDYRLTIANMTTEWGALSGLFPVDETLVNFYDERVKKLPQPHPRVNENTVKNLSENKVNSDNDAVYAKHLVVDLSSLSPYISGPNSVKVSTSLHDLSKQNIKINKAYLVSCTNSRLSDIKAAADIIKGHKVAEGVEFYVAAASSNVQKDAEAIGAWQDIIDAGAKPLPAGCGPCIGLGTGLLEDGEVGISATNRNFKGRMGSKDALAYLASPEVVAASAVLGKIGGPEELQGNPVPTNPEIVRSITSNESTETVDPDASGSSVDVLDGFPQSIEGELILCDADNINTDGIYPGKYTYQDDIPRSKMAEVCMENYDSEFKQKTKAGDIIISGYNFGTGSSREQAATAILARDMKLVVAGSFGNIFSRNSINNALLTLEIPALINKLREKYAQSNELTIRTGWFLKWDVTKNQVTVSDSEGNLILTQKVGELGTNLQDIIVKGGLEGWVKAQLKN</sequence>